<comment type="function">
    <text evidence="4">Bifunctional enzyme that converts glutamate to glutamate 5-semialdehyde, an intermediate in the biosynthesis of proline, ornithine and arginine.</text>
</comment>
<comment type="catalytic activity">
    <reaction evidence="2">
        <text>L-glutamate + ATP = L-glutamyl 5-phosphate + ADP</text>
        <dbReference type="Rhea" id="RHEA:14877"/>
        <dbReference type="ChEBI" id="CHEBI:29985"/>
        <dbReference type="ChEBI" id="CHEBI:30616"/>
        <dbReference type="ChEBI" id="CHEBI:58274"/>
        <dbReference type="ChEBI" id="CHEBI:456216"/>
        <dbReference type="EC" id="2.7.2.11"/>
    </reaction>
</comment>
<comment type="catalytic activity">
    <reaction evidence="2">
        <text>L-glutamate 5-semialdehyde + phosphate + NADP(+) = L-glutamyl 5-phosphate + NADPH + H(+)</text>
        <dbReference type="Rhea" id="RHEA:19541"/>
        <dbReference type="ChEBI" id="CHEBI:15378"/>
        <dbReference type="ChEBI" id="CHEBI:43474"/>
        <dbReference type="ChEBI" id="CHEBI:57783"/>
        <dbReference type="ChEBI" id="CHEBI:58066"/>
        <dbReference type="ChEBI" id="CHEBI:58274"/>
        <dbReference type="ChEBI" id="CHEBI:58349"/>
        <dbReference type="EC" id="1.2.1.41"/>
    </reaction>
</comment>
<comment type="activity regulation">
    <text evidence="3">Isoform Short: Inhibited by L-ornithine with a Ki of approximately 0.25 mm. Isoform Long: Insensitive to ornithine inhibition. Thus, the two amino acid insert in the long isoform abolishes feedback inhibition of P5CS activity by L-ornithine.</text>
</comment>
<comment type="pathway">
    <text evidence="2">Amino-acid biosynthesis; L-proline biosynthesis; L-glutamate 5-semialdehyde from L-glutamate: step 1/2.</text>
</comment>
<comment type="pathway">
    <text evidence="2">Amino-acid biosynthesis; L-proline biosynthesis; L-glutamate 5-semialdehyde from L-glutamate: step 2/2.</text>
</comment>
<comment type="subunit">
    <text evidence="2">Can form homodimers/multimers.</text>
</comment>
<comment type="subcellular location">
    <subcellularLocation>
        <location evidence="4">Mitochondrion matrix</location>
    </subcellularLocation>
    <text evidence="2 4">Exhibits puncta-like structures inside mitochondria under nutrient stress (By similarity). When cellular dependence on oxidative phosphorylation increases, forms filaments, which may increase its activity, and is sequestered in a subset of atypical mitochondria that lack cristae and ATP synthase (PubMed:39506109).</text>
</comment>
<comment type="alternative products">
    <event type="alternative splicing"/>
    <isoform>
        <id>Q9Z110-1</id>
        <name>Long</name>
        <sequence type="displayed"/>
    </isoform>
    <isoform>
        <id>Q9Z110-2</id>
        <name>Short</name>
        <sequence type="described" ref="VSP_005216"/>
    </isoform>
</comment>
<comment type="similarity">
    <text evidence="5">In the N-terminal section; belongs to the glutamate 5-kinase family.</text>
</comment>
<comment type="similarity">
    <text evidence="5">In the C-terminal section; belongs to the gamma-glutamyl phosphate reductase family.</text>
</comment>
<protein>
    <recommendedName>
        <fullName>Delta-1-pyrroline-5-carboxylate synthase</fullName>
        <shortName>P5CS</shortName>
    </recommendedName>
    <alternativeName>
        <fullName>Aldehyde dehydrogenase family 18 member A1</fullName>
    </alternativeName>
    <domain>
        <recommendedName>
            <fullName>Glutamate 5-kinase</fullName>
            <shortName>GK</shortName>
            <ecNumber evidence="2">2.7.2.11</ecNumber>
        </recommendedName>
        <alternativeName>
            <fullName>Gamma-glutamyl kinase</fullName>
        </alternativeName>
    </domain>
    <domain>
        <recommendedName>
            <fullName>Gamma-glutamyl phosphate reductase</fullName>
            <shortName>GPR</shortName>
            <ecNumber evidence="2">1.2.1.41</ecNumber>
        </recommendedName>
        <alternativeName>
            <fullName>Glutamate-5-semialdehyde dehydrogenase</fullName>
        </alternativeName>
        <alternativeName>
            <fullName>Glutamyl-gamma-semialdehyde dehydrogenase</fullName>
        </alternativeName>
    </domain>
</protein>
<sequence length="795" mass="87266">MLRHMHRSGVQPFRQRLLPWVQSIAVPRSNRVQPSAIRHVRSWSNIPFITVPLSRAHGKPFAHRSELKHAKRIVVKLGSAVVTRGDECGLALGRLASIVEQVSVLQNQGREMMLVTSGAVAFGKQRLRHEILLSQSVRQALHSGQNHLKEMAIPVLEARACAAAGQSGLMALYEAMFTQYSICAAQILVTNLDFHDEQKRRNLNGTLHELLRMNIVPIVNTNDAVVPPAEPNSDLQGVNVISVKDNDSLAARLAVEMKTDLLIVLSDVEGLFDSPPGSDDAKLIDIFYPGDQQSVTFGTKSRVGLGGMEAKVKAALWALQGGTSVVIANGTHPKVSGHVITDIVEGKKVGTFFSEVKPAGPTVEQQGEMARSGGRMLATLEPEQRAEIINHLADLLTDQREEILLANKKDLEEAEGRLASPLLKRLSLSTSKLNSLAIGLRQIAASSQESVGRVLRRTRIAKNLELEQVTVPIGVLLVIFESRPDCLPQVAALAIASGNGLLLKGGKEAAHSNRILHLLTQEALSIHGVKEAIQLVNTREEVEDLCRLDKIIDLIIPRGSSQLVRDIQKAAKGIPVMGHSEGICHMYVDSEASVDKVTRLVRDSKCEYPAACNALETLLIHRDLLRTPLFDQIIDMLRVEQVKIHAGPKFASYLTFSPSEVKSLRTEYGDLEVCIEVVDSVQEAIDHIHKYGSSHTDVIVTENEKTAEFFLQHVDSACVFWNASTRFSDGYRFGLGAEVGISTSRIHARGPVGLEGLLTTKWLLRGQDHVVSDFSEHGSLKYLHENLPVPQRNFS</sequence>
<name>P5CS_MOUSE</name>
<organism>
    <name type="scientific">Mus musculus</name>
    <name type="common">Mouse</name>
    <dbReference type="NCBI Taxonomy" id="10090"/>
    <lineage>
        <taxon>Eukaryota</taxon>
        <taxon>Metazoa</taxon>
        <taxon>Chordata</taxon>
        <taxon>Craniata</taxon>
        <taxon>Vertebrata</taxon>
        <taxon>Euteleostomi</taxon>
        <taxon>Mammalia</taxon>
        <taxon>Eutheria</taxon>
        <taxon>Euarchontoglires</taxon>
        <taxon>Glires</taxon>
        <taxon>Rodentia</taxon>
        <taxon>Myomorpha</taxon>
        <taxon>Muroidea</taxon>
        <taxon>Muridae</taxon>
        <taxon>Murinae</taxon>
        <taxon>Mus</taxon>
        <taxon>Mus</taxon>
    </lineage>
</organism>
<gene>
    <name type="primary">Aldh18a1</name>
    <name type="synonym">P5cs</name>
    <name type="synonym">Pycs</name>
</gene>
<reference key="1">
    <citation type="journal article" date="1999" name="J. Biol. Chem.">
        <title>Molecular enzymology of mammalian delta1-pyrroline-5-carboxylate synthase. Alternative splice donor utilization generates isoforms with different sensitivity to ornithine inhibition.</title>
        <authorList>
            <person name="Hu C.A."/>
            <person name="Lin W.-W."/>
            <person name="Obie C."/>
            <person name="Valle D."/>
        </authorList>
    </citation>
    <scope>NUCLEOTIDE SEQUENCE [MRNA]</scope>
    <scope>ALTERNATIVE SPLICING</scope>
    <scope>ACTIVITY REGULATION</scope>
</reference>
<reference key="2">
    <citation type="journal article" date="2005" name="Science">
        <title>The transcriptional landscape of the mammalian genome.</title>
        <authorList>
            <person name="Carninci P."/>
            <person name="Kasukawa T."/>
            <person name="Katayama S."/>
            <person name="Gough J."/>
            <person name="Frith M.C."/>
            <person name="Maeda N."/>
            <person name="Oyama R."/>
            <person name="Ravasi T."/>
            <person name="Lenhard B."/>
            <person name="Wells C."/>
            <person name="Kodzius R."/>
            <person name="Shimokawa K."/>
            <person name="Bajic V.B."/>
            <person name="Brenner S.E."/>
            <person name="Batalov S."/>
            <person name="Forrest A.R."/>
            <person name="Zavolan M."/>
            <person name="Davis M.J."/>
            <person name="Wilming L.G."/>
            <person name="Aidinis V."/>
            <person name="Allen J.E."/>
            <person name="Ambesi-Impiombato A."/>
            <person name="Apweiler R."/>
            <person name="Aturaliya R.N."/>
            <person name="Bailey T.L."/>
            <person name="Bansal M."/>
            <person name="Baxter L."/>
            <person name="Beisel K.W."/>
            <person name="Bersano T."/>
            <person name="Bono H."/>
            <person name="Chalk A.M."/>
            <person name="Chiu K.P."/>
            <person name="Choudhary V."/>
            <person name="Christoffels A."/>
            <person name="Clutterbuck D.R."/>
            <person name="Crowe M.L."/>
            <person name="Dalla E."/>
            <person name="Dalrymple B.P."/>
            <person name="de Bono B."/>
            <person name="Della Gatta G."/>
            <person name="di Bernardo D."/>
            <person name="Down T."/>
            <person name="Engstrom P."/>
            <person name="Fagiolini M."/>
            <person name="Faulkner G."/>
            <person name="Fletcher C.F."/>
            <person name="Fukushima T."/>
            <person name="Furuno M."/>
            <person name="Futaki S."/>
            <person name="Gariboldi M."/>
            <person name="Georgii-Hemming P."/>
            <person name="Gingeras T.R."/>
            <person name="Gojobori T."/>
            <person name="Green R.E."/>
            <person name="Gustincich S."/>
            <person name="Harbers M."/>
            <person name="Hayashi Y."/>
            <person name="Hensch T.K."/>
            <person name="Hirokawa N."/>
            <person name="Hill D."/>
            <person name="Huminiecki L."/>
            <person name="Iacono M."/>
            <person name="Ikeo K."/>
            <person name="Iwama A."/>
            <person name="Ishikawa T."/>
            <person name="Jakt M."/>
            <person name="Kanapin A."/>
            <person name="Katoh M."/>
            <person name="Kawasawa Y."/>
            <person name="Kelso J."/>
            <person name="Kitamura H."/>
            <person name="Kitano H."/>
            <person name="Kollias G."/>
            <person name="Krishnan S.P."/>
            <person name="Kruger A."/>
            <person name="Kummerfeld S.K."/>
            <person name="Kurochkin I.V."/>
            <person name="Lareau L.F."/>
            <person name="Lazarevic D."/>
            <person name="Lipovich L."/>
            <person name="Liu J."/>
            <person name="Liuni S."/>
            <person name="McWilliam S."/>
            <person name="Madan Babu M."/>
            <person name="Madera M."/>
            <person name="Marchionni L."/>
            <person name="Matsuda H."/>
            <person name="Matsuzawa S."/>
            <person name="Miki H."/>
            <person name="Mignone F."/>
            <person name="Miyake S."/>
            <person name="Morris K."/>
            <person name="Mottagui-Tabar S."/>
            <person name="Mulder N."/>
            <person name="Nakano N."/>
            <person name="Nakauchi H."/>
            <person name="Ng P."/>
            <person name="Nilsson R."/>
            <person name="Nishiguchi S."/>
            <person name="Nishikawa S."/>
            <person name="Nori F."/>
            <person name="Ohara O."/>
            <person name="Okazaki Y."/>
            <person name="Orlando V."/>
            <person name="Pang K.C."/>
            <person name="Pavan W.J."/>
            <person name="Pavesi G."/>
            <person name="Pesole G."/>
            <person name="Petrovsky N."/>
            <person name="Piazza S."/>
            <person name="Reed J."/>
            <person name="Reid J.F."/>
            <person name="Ring B.Z."/>
            <person name="Ringwald M."/>
            <person name="Rost B."/>
            <person name="Ruan Y."/>
            <person name="Salzberg S.L."/>
            <person name="Sandelin A."/>
            <person name="Schneider C."/>
            <person name="Schoenbach C."/>
            <person name="Sekiguchi K."/>
            <person name="Semple C.A."/>
            <person name="Seno S."/>
            <person name="Sessa L."/>
            <person name="Sheng Y."/>
            <person name="Shibata Y."/>
            <person name="Shimada H."/>
            <person name="Shimada K."/>
            <person name="Silva D."/>
            <person name="Sinclair B."/>
            <person name="Sperling S."/>
            <person name="Stupka E."/>
            <person name="Sugiura K."/>
            <person name="Sultana R."/>
            <person name="Takenaka Y."/>
            <person name="Taki K."/>
            <person name="Tammoja K."/>
            <person name="Tan S.L."/>
            <person name="Tang S."/>
            <person name="Taylor M.S."/>
            <person name="Tegner J."/>
            <person name="Teichmann S.A."/>
            <person name="Ueda H.R."/>
            <person name="van Nimwegen E."/>
            <person name="Verardo R."/>
            <person name="Wei C.L."/>
            <person name="Yagi K."/>
            <person name="Yamanishi H."/>
            <person name="Zabarovsky E."/>
            <person name="Zhu S."/>
            <person name="Zimmer A."/>
            <person name="Hide W."/>
            <person name="Bult C."/>
            <person name="Grimmond S.M."/>
            <person name="Teasdale R.D."/>
            <person name="Liu E.T."/>
            <person name="Brusic V."/>
            <person name="Quackenbush J."/>
            <person name="Wahlestedt C."/>
            <person name="Mattick J.S."/>
            <person name="Hume D.A."/>
            <person name="Kai C."/>
            <person name="Sasaki D."/>
            <person name="Tomaru Y."/>
            <person name="Fukuda S."/>
            <person name="Kanamori-Katayama M."/>
            <person name="Suzuki M."/>
            <person name="Aoki J."/>
            <person name="Arakawa T."/>
            <person name="Iida J."/>
            <person name="Imamura K."/>
            <person name="Itoh M."/>
            <person name="Kato T."/>
            <person name="Kawaji H."/>
            <person name="Kawagashira N."/>
            <person name="Kawashima T."/>
            <person name="Kojima M."/>
            <person name="Kondo S."/>
            <person name="Konno H."/>
            <person name="Nakano K."/>
            <person name="Ninomiya N."/>
            <person name="Nishio T."/>
            <person name="Okada M."/>
            <person name="Plessy C."/>
            <person name="Shibata K."/>
            <person name="Shiraki T."/>
            <person name="Suzuki S."/>
            <person name="Tagami M."/>
            <person name="Waki K."/>
            <person name="Watahiki A."/>
            <person name="Okamura-Oho Y."/>
            <person name="Suzuki H."/>
            <person name="Kawai J."/>
            <person name="Hayashizaki Y."/>
        </authorList>
    </citation>
    <scope>NUCLEOTIDE SEQUENCE [LARGE SCALE MRNA]</scope>
    <source>
        <strain>C57BL/6J</strain>
        <strain>NOD</strain>
        <tissue>Bone marrow</tissue>
        <tissue>Kidney</tissue>
        <tissue>Thymus</tissue>
    </source>
</reference>
<reference key="3">
    <citation type="submission" date="2005-07" db="EMBL/GenBank/DDBJ databases">
        <authorList>
            <person name="Mural R.J."/>
            <person name="Adams M.D."/>
            <person name="Myers E.W."/>
            <person name="Smith H.O."/>
            <person name="Venter J.C."/>
        </authorList>
    </citation>
    <scope>NUCLEOTIDE SEQUENCE [LARGE SCALE GENOMIC DNA]</scope>
</reference>
<reference key="4">
    <citation type="journal article" date="2004" name="Genome Res.">
        <title>The status, quality, and expansion of the NIH full-length cDNA project: the Mammalian Gene Collection (MGC).</title>
        <authorList>
            <consortium name="The MGC Project Team"/>
        </authorList>
    </citation>
    <scope>NUCLEOTIDE SEQUENCE [LARGE SCALE MRNA]</scope>
    <source>
        <strain>FVB/N</strain>
        <strain>FVB/N-3</strain>
        <tissue>Mammary tumor</tissue>
        <tissue>Salivary gland</tissue>
    </source>
</reference>
<reference key="5">
    <citation type="journal article" date="2010" name="Cell">
        <title>A tissue-specific atlas of mouse protein phosphorylation and expression.</title>
        <authorList>
            <person name="Huttlin E.L."/>
            <person name="Jedrychowski M.P."/>
            <person name="Elias J.E."/>
            <person name="Goswami T."/>
            <person name="Rad R."/>
            <person name="Beausoleil S.A."/>
            <person name="Villen J."/>
            <person name="Haas W."/>
            <person name="Sowa M.E."/>
            <person name="Gygi S.P."/>
        </authorList>
    </citation>
    <scope>IDENTIFICATION BY MASS SPECTROMETRY [LARGE SCALE ANALYSIS]</scope>
    <source>
        <tissue>Brain</tissue>
        <tissue>Heart</tissue>
        <tissue>Lung</tissue>
        <tissue>Pancreas</tissue>
        <tissue>Spleen</tissue>
        <tissue>Testis</tissue>
    </source>
</reference>
<reference key="6">
    <citation type="journal article" date="2013" name="Mol. Cell">
        <title>SIRT5-mediated lysine desuccinylation impacts diverse metabolic pathways.</title>
        <authorList>
            <person name="Park J."/>
            <person name="Chen Y."/>
            <person name="Tishkoff D.X."/>
            <person name="Peng C."/>
            <person name="Tan M."/>
            <person name="Dai L."/>
            <person name="Xie Z."/>
            <person name="Zhang Y."/>
            <person name="Zwaans B.M."/>
            <person name="Skinner M.E."/>
            <person name="Lombard D.B."/>
            <person name="Zhao Y."/>
        </authorList>
    </citation>
    <scope>SUCCINYLATION [LARGE SCALE ANALYSIS] AT LYS-311; LYS-347 AND LYS-550</scope>
    <scope>IDENTIFICATION BY MASS SPECTROMETRY [LARGE SCALE ANALYSIS]</scope>
    <source>
        <tissue>Embryonic fibroblast</tissue>
    </source>
</reference>
<reference key="7">
    <citation type="journal article" date="2024" name="Nature">
        <title>Cellular ATP demand creates metabolically distinct subpopulations of mitochondria.</title>
        <authorList>
            <person name="Ryu K.W."/>
            <person name="Fung T.S."/>
            <person name="Baker D.C."/>
            <person name="Saoi M."/>
            <person name="Park J."/>
            <person name="Febres-Aldana C.A."/>
            <person name="Aly R.G."/>
            <person name="Cui R."/>
            <person name="Sharma A."/>
            <person name="Fu Y."/>
            <person name="Jones O.L."/>
            <person name="Cai X."/>
            <person name="Pasolli H.A."/>
            <person name="Cross J.R."/>
            <person name="Rudin C.M."/>
            <person name="Thompson C.B."/>
        </authorList>
    </citation>
    <scope>FUNCTION</scope>
    <scope>SUBCELLULAR LOCATION</scope>
</reference>
<keyword id="KW-0025">Alternative splicing</keyword>
<keyword id="KW-0028">Amino-acid biosynthesis</keyword>
<keyword id="KW-0067">ATP-binding</keyword>
<keyword id="KW-0418">Kinase</keyword>
<keyword id="KW-0496">Mitochondrion</keyword>
<keyword id="KW-0511">Multifunctional enzyme</keyword>
<keyword id="KW-0521">NADP</keyword>
<keyword id="KW-0547">Nucleotide-binding</keyword>
<keyword id="KW-0560">Oxidoreductase</keyword>
<keyword id="KW-0641">Proline biosynthesis</keyword>
<keyword id="KW-1185">Reference proteome</keyword>
<keyword id="KW-0808">Transferase</keyword>
<accession>Q9Z110</accession>
<accession>Q8BGM2</accession>
<accession>Q9R1P6</accession>
<dbReference type="EC" id="2.7.2.11" evidence="2"/>
<dbReference type="EC" id="1.2.1.41" evidence="2"/>
<dbReference type="EMBL" id="AF056573">
    <property type="protein sequence ID" value="AAD17517.1"/>
    <property type="molecule type" value="mRNA"/>
</dbReference>
<dbReference type="EMBL" id="AF056574">
    <property type="protein sequence ID" value="AAD17518.1"/>
    <property type="molecule type" value="mRNA"/>
</dbReference>
<dbReference type="EMBL" id="AK151072">
    <property type="protein sequence ID" value="BAE30088.1"/>
    <property type="molecule type" value="mRNA"/>
</dbReference>
<dbReference type="EMBL" id="AK153946">
    <property type="protein sequence ID" value="BAE32270.1"/>
    <property type="molecule type" value="mRNA"/>
</dbReference>
<dbReference type="EMBL" id="AK168905">
    <property type="protein sequence ID" value="BAE40719.1"/>
    <property type="molecule type" value="mRNA"/>
</dbReference>
<dbReference type="EMBL" id="CH466534">
    <property type="protein sequence ID" value="EDL41837.1"/>
    <property type="molecule type" value="Genomic_DNA"/>
</dbReference>
<dbReference type="EMBL" id="BC033427">
    <property type="protein sequence ID" value="AAH33427.1"/>
    <property type="molecule type" value="mRNA"/>
</dbReference>
<dbReference type="EMBL" id="BC037699">
    <property type="protein sequence ID" value="AAH37699.1"/>
    <property type="molecule type" value="mRNA"/>
</dbReference>
<dbReference type="CCDS" id="CCDS29803.1">
    <molecule id="Q9Z110-1"/>
</dbReference>
<dbReference type="CCDS" id="CCDS57144.1">
    <molecule id="Q9Z110-2"/>
</dbReference>
<dbReference type="RefSeq" id="NP_062672.2">
    <molecule id="Q9Z110-1"/>
    <property type="nucleotide sequence ID" value="NM_019698.2"/>
</dbReference>
<dbReference type="RefSeq" id="NP_705782.2">
    <molecule id="Q9Z110-2"/>
    <property type="nucleotide sequence ID" value="NM_153554.2"/>
</dbReference>
<dbReference type="SMR" id="Q9Z110"/>
<dbReference type="BioGRID" id="207993">
    <property type="interactions" value="10"/>
</dbReference>
<dbReference type="FunCoup" id="Q9Z110">
    <property type="interactions" value="1553"/>
</dbReference>
<dbReference type="IntAct" id="Q9Z110">
    <property type="interactions" value="6"/>
</dbReference>
<dbReference type="STRING" id="10090.ENSMUSP00000025979"/>
<dbReference type="GlyGen" id="Q9Z110">
    <property type="glycosylation" value="3 sites, 1 N-linked glycan (1 site), 1 O-linked glycan (1 site)"/>
</dbReference>
<dbReference type="iPTMnet" id="Q9Z110"/>
<dbReference type="MetOSite" id="Q9Z110"/>
<dbReference type="PhosphoSitePlus" id="Q9Z110"/>
<dbReference type="SwissPalm" id="Q9Z110"/>
<dbReference type="PaxDb" id="10090-ENSMUSP00000025979"/>
<dbReference type="PeptideAtlas" id="Q9Z110"/>
<dbReference type="ProteomicsDB" id="294234">
    <molecule id="Q9Z110-1"/>
</dbReference>
<dbReference type="ProteomicsDB" id="294235">
    <molecule id="Q9Z110-2"/>
</dbReference>
<dbReference type="Pumba" id="Q9Z110"/>
<dbReference type="TopDownProteomics" id="Q9Z110-1">
    <molecule id="Q9Z110-1"/>
</dbReference>
<dbReference type="Antibodypedia" id="2043">
    <property type="antibodies" value="207 antibodies from 31 providers"/>
</dbReference>
<dbReference type="DNASU" id="56454"/>
<dbReference type="Ensembl" id="ENSMUST00000025979.13">
    <molecule id="Q9Z110-1"/>
    <property type="protein sequence ID" value="ENSMUSP00000025979.7"/>
    <property type="gene ID" value="ENSMUSG00000025007.14"/>
</dbReference>
<dbReference type="Ensembl" id="ENSMUST00000176939.8">
    <molecule id="Q9Z110-2"/>
    <property type="protein sequence ID" value="ENSMUSP00000135426.2"/>
    <property type="gene ID" value="ENSMUSG00000025007.14"/>
</dbReference>
<dbReference type="GeneID" id="56454"/>
<dbReference type="KEGG" id="mmu:56454"/>
<dbReference type="UCSC" id="uc008hkw.2">
    <molecule id="Q9Z110-2"/>
    <property type="organism name" value="mouse"/>
</dbReference>
<dbReference type="UCSC" id="uc008hkx.2">
    <molecule id="Q9Z110-1"/>
    <property type="organism name" value="mouse"/>
</dbReference>
<dbReference type="AGR" id="MGI:1888908"/>
<dbReference type="CTD" id="5832"/>
<dbReference type="MGI" id="MGI:1888908">
    <property type="gene designation" value="Aldh18a1"/>
</dbReference>
<dbReference type="VEuPathDB" id="HostDB:ENSMUSG00000025007"/>
<dbReference type="eggNOG" id="KOG1154">
    <property type="taxonomic scope" value="Eukaryota"/>
</dbReference>
<dbReference type="eggNOG" id="KOG4165">
    <property type="taxonomic scope" value="Eukaryota"/>
</dbReference>
<dbReference type="GeneTree" id="ENSGT00500000044903"/>
<dbReference type="HOGENOM" id="CLU_016144_0_0_1"/>
<dbReference type="InParanoid" id="Q9Z110"/>
<dbReference type="OMA" id="PPMFIVD"/>
<dbReference type="OrthoDB" id="1934954at2759"/>
<dbReference type="PhylomeDB" id="Q9Z110"/>
<dbReference type="TreeFam" id="TF314372"/>
<dbReference type="BRENDA" id="1.2.1.41">
    <property type="organism ID" value="3474"/>
</dbReference>
<dbReference type="Reactome" id="R-MMU-8964539">
    <property type="pathway name" value="Glutamate and glutamine metabolism"/>
</dbReference>
<dbReference type="Reactome" id="R-MMU-9837999">
    <property type="pathway name" value="Mitochondrial protein degradation"/>
</dbReference>
<dbReference type="UniPathway" id="UPA00098">
    <property type="reaction ID" value="UER00359"/>
</dbReference>
<dbReference type="UniPathway" id="UPA00098">
    <property type="reaction ID" value="UER00360"/>
</dbReference>
<dbReference type="BioGRID-ORCS" id="56454">
    <property type="hits" value="4 hits in 79 CRISPR screens"/>
</dbReference>
<dbReference type="ChiTaRS" id="Aldh18a1">
    <property type="organism name" value="mouse"/>
</dbReference>
<dbReference type="PRO" id="PR:Q9Z110"/>
<dbReference type="Proteomes" id="UP000000589">
    <property type="component" value="Chromosome 19"/>
</dbReference>
<dbReference type="RNAct" id="Q9Z110">
    <property type="molecule type" value="protein"/>
</dbReference>
<dbReference type="Bgee" id="ENSMUSG00000025007">
    <property type="expression patterns" value="Expressed in lacrimal gland and 266 other cell types or tissues"/>
</dbReference>
<dbReference type="ExpressionAtlas" id="Q9Z110">
    <property type="expression patterns" value="baseline and differential"/>
</dbReference>
<dbReference type="GO" id="GO:0005743">
    <property type="term" value="C:mitochondrial inner membrane"/>
    <property type="evidence" value="ECO:0007669"/>
    <property type="project" value="UniProtKB-KW"/>
</dbReference>
<dbReference type="GO" id="GO:0005759">
    <property type="term" value="C:mitochondrial matrix"/>
    <property type="evidence" value="ECO:0007669"/>
    <property type="project" value="UniProtKB-SubCell"/>
</dbReference>
<dbReference type="GO" id="GO:0005739">
    <property type="term" value="C:mitochondrion"/>
    <property type="evidence" value="ECO:0007005"/>
    <property type="project" value="MGI"/>
</dbReference>
<dbReference type="GO" id="GO:0005524">
    <property type="term" value="F:ATP binding"/>
    <property type="evidence" value="ECO:0007669"/>
    <property type="project" value="UniProtKB-KW"/>
</dbReference>
<dbReference type="GO" id="GO:0004349">
    <property type="term" value="F:glutamate 5-kinase activity"/>
    <property type="evidence" value="ECO:0000314"/>
    <property type="project" value="MGI"/>
</dbReference>
<dbReference type="GO" id="GO:0004350">
    <property type="term" value="F:glutamate-5-semialdehyde dehydrogenase activity"/>
    <property type="evidence" value="ECO:0000250"/>
    <property type="project" value="UniProtKB"/>
</dbReference>
<dbReference type="GO" id="GO:0042802">
    <property type="term" value="F:identical protein binding"/>
    <property type="evidence" value="ECO:0007669"/>
    <property type="project" value="Ensembl"/>
</dbReference>
<dbReference type="GO" id="GO:0008652">
    <property type="term" value="P:amino acid biosynthetic process"/>
    <property type="evidence" value="ECO:0000304"/>
    <property type="project" value="MGI"/>
</dbReference>
<dbReference type="GO" id="GO:0019240">
    <property type="term" value="P:citrulline biosynthetic process"/>
    <property type="evidence" value="ECO:0000250"/>
    <property type="project" value="UniProtKB"/>
</dbReference>
<dbReference type="GO" id="GO:0006536">
    <property type="term" value="P:glutamate metabolic process"/>
    <property type="evidence" value="ECO:0000250"/>
    <property type="project" value="UniProtKB"/>
</dbReference>
<dbReference type="GO" id="GO:0055129">
    <property type="term" value="P:L-proline biosynthetic process"/>
    <property type="evidence" value="ECO:0007669"/>
    <property type="project" value="UniProtKB-UniPathway"/>
</dbReference>
<dbReference type="GO" id="GO:0006592">
    <property type="term" value="P:ornithine biosynthetic process"/>
    <property type="evidence" value="ECO:0007669"/>
    <property type="project" value="Ensembl"/>
</dbReference>
<dbReference type="GO" id="GO:0006561">
    <property type="term" value="P:proline biosynthetic process"/>
    <property type="evidence" value="ECO:0000250"/>
    <property type="project" value="UniProtKB"/>
</dbReference>
<dbReference type="GO" id="GO:0009266">
    <property type="term" value="P:response to temperature stimulus"/>
    <property type="evidence" value="ECO:0007669"/>
    <property type="project" value="Ensembl"/>
</dbReference>
<dbReference type="CDD" id="cd04256">
    <property type="entry name" value="AAK_P5CS_ProBA"/>
    <property type="match status" value="1"/>
</dbReference>
<dbReference type="CDD" id="cd07079">
    <property type="entry name" value="ALDH_F18-19_ProA-GPR"/>
    <property type="match status" value="1"/>
</dbReference>
<dbReference type="FunFam" id="3.40.1160.10:FF:000010">
    <property type="entry name" value="Delta-1-pyrroline-5-carboxylate synthase"/>
    <property type="match status" value="1"/>
</dbReference>
<dbReference type="FunFam" id="3.40.309.10:FF:000011">
    <property type="entry name" value="Delta-1-pyrroline-5-carboxylate synthase"/>
    <property type="match status" value="1"/>
</dbReference>
<dbReference type="Gene3D" id="3.40.1160.10">
    <property type="entry name" value="Acetylglutamate kinase-like"/>
    <property type="match status" value="1"/>
</dbReference>
<dbReference type="Gene3D" id="3.40.605.10">
    <property type="entry name" value="Aldehyde Dehydrogenase, Chain A, domain 1"/>
    <property type="match status" value="1"/>
</dbReference>
<dbReference type="Gene3D" id="3.40.309.10">
    <property type="entry name" value="Aldehyde Dehydrogenase, Chain A, domain 2"/>
    <property type="match status" value="1"/>
</dbReference>
<dbReference type="HAMAP" id="MF_00412">
    <property type="entry name" value="ProA"/>
    <property type="match status" value="1"/>
</dbReference>
<dbReference type="HAMAP" id="MF_00456">
    <property type="entry name" value="ProB"/>
    <property type="match status" value="1"/>
</dbReference>
<dbReference type="InterPro" id="IPR036393">
    <property type="entry name" value="AceGlu_kinase-like_sf"/>
</dbReference>
<dbReference type="InterPro" id="IPR016161">
    <property type="entry name" value="Ald_DH/histidinol_DH"/>
</dbReference>
<dbReference type="InterPro" id="IPR016163">
    <property type="entry name" value="Ald_DH_C"/>
</dbReference>
<dbReference type="InterPro" id="IPR016162">
    <property type="entry name" value="Ald_DH_N"/>
</dbReference>
<dbReference type="InterPro" id="IPR015590">
    <property type="entry name" value="Aldehyde_DH_dom"/>
</dbReference>
<dbReference type="InterPro" id="IPR001048">
    <property type="entry name" value="Asp/Glu/Uridylate_kinase"/>
</dbReference>
<dbReference type="InterPro" id="IPR020593">
    <property type="entry name" value="G-glutamylP_reductase_CS"/>
</dbReference>
<dbReference type="InterPro" id="IPR041744">
    <property type="entry name" value="G5K_ProBA"/>
</dbReference>
<dbReference type="InterPro" id="IPR001057">
    <property type="entry name" value="Glu/AcGlu_kinase"/>
</dbReference>
<dbReference type="InterPro" id="IPR005715">
    <property type="entry name" value="Glu_5kinase/COase_Synthase"/>
</dbReference>
<dbReference type="InterPro" id="IPR019797">
    <property type="entry name" value="Glutamate_5-kinase_CS"/>
</dbReference>
<dbReference type="InterPro" id="IPR000965">
    <property type="entry name" value="GPR_dom"/>
</dbReference>
<dbReference type="InterPro" id="IPR005766">
    <property type="entry name" value="P5_carboxy_syn"/>
</dbReference>
<dbReference type="NCBIfam" id="TIGR01092">
    <property type="entry name" value="P5CS"/>
    <property type="match status" value="1"/>
</dbReference>
<dbReference type="NCBIfam" id="NF001221">
    <property type="entry name" value="PRK00197.1"/>
    <property type="match status" value="1"/>
</dbReference>
<dbReference type="NCBIfam" id="TIGR00407">
    <property type="entry name" value="proA"/>
    <property type="match status" value="1"/>
</dbReference>
<dbReference type="PANTHER" id="PTHR11063:SF8">
    <property type="entry name" value="DELTA-1-PYRROLINE-5-CARBOXYLATE SYNTHASE"/>
    <property type="match status" value="1"/>
</dbReference>
<dbReference type="PANTHER" id="PTHR11063">
    <property type="entry name" value="GLUTAMATE SEMIALDEHYDE DEHYDROGENASE"/>
    <property type="match status" value="1"/>
</dbReference>
<dbReference type="Pfam" id="PF00696">
    <property type="entry name" value="AA_kinase"/>
    <property type="match status" value="1"/>
</dbReference>
<dbReference type="Pfam" id="PF00171">
    <property type="entry name" value="Aldedh"/>
    <property type="match status" value="1"/>
</dbReference>
<dbReference type="PIRSF" id="PIRSF036429">
    <property type="entry name" value="P5C_syn"/>
    <property type="match status" value="1"/>
</dbReference>
<dbReference type="PRINTS" id="PR00474">
    <property type="entry name" value="GLU5KINASE"/>
</dbReference>
<dbReference type="SUPFAM" id="SSF53720">
    <property type="entry name" value="ALDH-like"/>
    <property type="match status" value="1"/>
</dbReference>
<dbReference type="SUPFAM" id="SSF53633">
    <property type="entry name" value="Carbamate kinase-like"/>
    <property type="match status" value="1"/>
</dbReference>
<dbReference type="PROSITE" id="PS00902">
    <property type="entry name" value="GLUTAMATE_5_KINASE"/>
    <property type="match status" value="1"/>
</dbReference>
<dbReference type="PROSITE" id="PS01223">
    <property type="entry name" value="PROA"/>
    <property type="match status" value="1"/>
</dbReference>
<proteinExistence type="evidence at protein level"/>
<feature type="chain" id="PRO_0000109770" description="Delta-1-pyrroline-5-carboxylate synthase">
    <location>
        <begin position="1"/>
        <end position="795"/>
    </location>
</feature>
<feature type="region of interest" description="Glutamate 5-kinase">
    <location>
        <begin position="1"/>
        <end position="361"/>
    </location>
</feature>
<feature type="region of interest" description="Gamma-glutamyl phosphate reductase">
    <location>
        <begin position="362"/>
        <end position="795"/>
    </location>
</feature>
<feature type="binding site" evidence="1">
    <location>
        <position position="117"/>
    </location>
    <ligand>
        <name>substrate</name>
    </ligand>
</feature>
<feature type="binding site" evidence="1">
    <location>
        <position position="223"/>
    </location>
    <ligand>
        <name>substrate</name>
    </ligand>
</feature>
<feature type="binding site" evidence="1">
    <location>
        <position position="246"/>
    </location>
    <ligand>
        <name>substrate</name>
    </ligand>
</feature>
<feature type="binding site" evidence="1">
    <location>
        <begin position="266"/>
        <end position="267"/>
    </location>
    <ligand>
        <name>ATP</name>
        <dbReference type="ChEBI" id="CHEBI:30616"/>
    </ligand>
</feature>
<feature type="binding site" evidence="1">
    <location>
        <begin position="305"/>
        <end position="311"/>
    </location>
    <ligand>
        <name>ATP</name>
        <dbReference type="ChEBI" id="CHEBI:30616"/>
    </ligand>
</feature>
<feature type="modified residue" description="N6-succinyllysine" evidence="6">
    <location>
        <position position="311"/>
    </location>
</feature>
<feature type="modified residue" description="N6-succinyllysine" evidence="6">
    <location>
        <position position="347"/>
    </location>
</feature>
<feature type="modified residue" description="N6-succinyllysine" evidence="6">
    <location>
        <position position="550"/>
    </location>
</feature>
<feature type="splice variant" id="VSP_005216" description="In isoform Short." evidence="5">
    <location>
        <begin position="239"/>
        <end position="240"/>
    </location>
</feature>
<feature type="sequence conflict" description="In Ref. 1; AAD17517/AAD17518." evidence="5" ref="1">
    <original>G</original>
    <variation>S</variation>
    <location>
        <position position="582"/>
    </location>
</feature>
<evidence type="ECO:0000250" key="1"/>
<evidence type="ECO:0000250" key="2">
    <source>
        <dbReference type="UniProtKB" id="P54886"/>
    </source>
</evidence>
<evidence type="ECO:0000269" key="3">
    <source>
    </source>
</evidence>
<evidence type="ECO:0000269" key="4">
    <source>
    </source>
</evidence>
<evidence type="ECO:0000305" key="5"/>
<evidence type="ECO:0007744" key="6">
    <source>
    </source>
</evidence>